<feature type="chain" id="PRO_0000447172" description="Protein YthB">
    <location>
        <begin position="1"/>
        <end position="32"/>
    </location>
</feature>
<comment type="induction">
    <text evidence="1">Expressed in both exponential and stationary phase in rich medium; expression is considerably higher during exponential phase (at protein level).</text>
</comment>
<comment type="miscellaneous">
    <text evidence="1">Encoded antisense to nanS.</text>
</comment>
<dbReference type="EMBL" id="U00096">
    <property type="protein sequence ID" value="QNV50556.1"/>
    <property type="molecule type" value="Genomic_DNA"/>
</dbReference>
<dbReference type="InParanoid" id="P0DSI0"/>
<dbReference type="BioCyc" id="EcoCyc:MONOMER0-4516"/>
<dbReference type="Proteomes" id="UP000000625">
    <property type="component" value="Chromosome"/>
</dbReference>
<dbReference type="Pfam" id="PF23516">
    <property type="entry name" value="YthB"/>
    <property type="match status" value="1"/>
</dbReference>
<proteinExistence type="evidence at protein level"/>
<name>YTHB_ECOLI</name>
<evidence type="ECO:0000269" key="1">
    <source>
    </source>
</evidence>
<evidence type="ECO:0000303" key="2">
    <source>
    </source>
</evidence>
<evidence type="ECO:0000312" key="3">
    <source>
        <dbReference type="EMBL" id="QNV50556.1"/>
    </source>
</evidence>
<protein>
    <recommendedName>
        <fullName evidence="2">Protein YthB</fullName>
    </recommendedName>
</protein>
<gene>
    <name evidence="2" type="primary">ythB</name>
    <name evidence="3" type="ordered locus">b4802</name>
</gene>
<accession>P0DSI0</accession>
<accession>A0A7H2C7A9</accession>
<keyword id="KW-1185">Reference proteome</keyword>
<reference key="1">
    <citation type="journal article" date="1997" name="Science">
        <title>The complete genome sequence of Escherichia coli K-12.</title>
        <authorList>
            <person name="Blattner F.R."/>
            <person name="Plunkett G. III"/>
            <person name="Bloch C.A."/>
            <person name="Perna N.T."/>
            <person name="Burland V."/>
            <person name="Riley M."/>
            <person name="Collado-Vides J."/>
            <person name="Glasner J.D."/>
            <person name="Rode C.K."/>
            <person name="Mayhew G.F."/>
            <person name="Gregor J."/>
            <person name="Davis N.W."/>
            <person name="Kirkpatrick H.A."/>
            <person name="Goeden M.A."/>
            <person name="Rose D.J."/>
            <person name="Mau B."/>
            <person name="Shao Y."/>
        </authorList>
    </citation>
    <scope>NUCLEOTIDE SEQUENCE [LARGE SCALE GENOMIC DNA]</scope>
    <source>
        <strain>K12 / MG1655 / ATCC 47076</strain>
    </source>
</reference>
<reference key="2">
    <citation type="journal article" date="2019" name="MBio">
        <title>Identifying small proteins by ribosome profiling with stalled initiation complexes.</title>
        <authorList>
            <person name="Weaver J."/>
            <person name="Mohammad F."/>
            <person name="Buskirk A.R."/>
            <person name="Storz G."/>
        </authorList>
    </citation>
    <scope>IDENTIFICATION</scope>
    <scope>INDUCTION</scope>
    <source>
        <strain>K12 / MG1655 / ATCC 47076</strain>
    </source>
</reference>
<sequence length="32" mass="3574">MNKLPAHLSRQNCKIASTNLSEIIPRRAAVLK</sequence>
<organism>
    <name type="scientific">Escherichia coli (strain K12)</name>
    <dbReference type="NCBI Taxonomy" id="83333"/>
    <lineage>
        <taxon>Bacteria</taxon>
        <taxon>Pseudomonadati</taxon>
        <taxon>Pseudomonadota</taxon>
        <taxon>Gammaproteobacteria</taxon>
        <taxon>Enterobacterales</taxon>
        <taxon>Enterobacteriaceae</taxon>
        <taxon>Escherichia</taxon>
    </lineage>
</organism>